<accession>B8ZPL4</accession>
<feature type="chain" id="PRO_1000190174" description="Glycerol-3-phosphate dehydrogenase [NAD(P)+]">
    <location>
        <begin position="1"/>
        <end position="338"/>
    </location>
</feature>
<feature type="active site" description="Proton acceptor" evidence="1">
    <location>
        <position position="194"/>
    </location>
</feature>
<feature type="binding site" evidence="1">
    <location>
        <position position="13"/>
    </location>
    <ligand>
        <name>NADPH</name>
        <dbReference type="ChEBI" id="CHEBI:57783"/>
    </ligand>
</feature>
<feature type="binding site" evidence="1">
    <location>
        <position position="14"/>
    </location>
    <ligand>
        <name>NADPH</name>
        <dbReference type="ChEBI" id="CHEBI:57783"/>
    </ligand>
</feature>
<feature type="binding site" evidence="1">
    <location>
        <position position="108"/>
    </location>
    <ligand>
        <name>NADPH</name>
        <dbReference type="ChEBI" id="CHEBI:57783"/>
    </ligand>
</feature>
<feature type="binding site" evidence="1">
    <location>
        <position position="108"/>
    </location>
    <ligand>
        <name>sn-glycerol 3-phosphate</name>
        <dbReference type="ChEBI" id="CHEBI:57597"/>
    </ligand>
</feature>
<feature type="binding site" evidence="1">
    <location>
        <position position="139"/>
    </location>
    <ligand>
        <name>sn-glycerol 3-phosphate</name>
        <dbReference type="ChEBI" id="CHEBI:57597"/>
    </ligand>
</feature>
<feature type="binding site" evidence="1">
    <location>
        <position position="141"/>
    </location>
    <ligand>
        <name>sn-glycerol 3-phosphate</name>
        <dbReference type="ChEBI" id="CHEBI:57597"/>
    </ligand>
</feature>
<feature type="binding site" evidence="1">
    <location>
        <position position="143"/>
    </location>
    <ligand>
        <name>NADPH</name>
        <dbReference type="ChEBI" id="CHEBI:57783"/>
    </ligand>
</feature>
<feature type="binding site" evidence="1">
    <location>
        <position position="194"/>
    </location>
    <ligand>
        <name>sn-glycerol 3-phosphate</name>
        <dbReference type="ChEBI" id="CHEBI:57597"/>
    </ligand>
</feature>
<feature type="binding site" evidence="1">
    <location>
        <position position="247"/>
    </location>
    <ligand>
        <name>sn-glycerol 3-phosphate</name>
        <dbReference type="ChEBI" id="CHEBI:57597"/>
    </ligand>
</feature>
<feature type="binding site" evidence="1">
    <location>
        <position position="257"/>
    </location>
    <ligand>
        <name>sn-glycerol 3-phosphate</name>
        <dbReference type="ChEBI" id="CHEBI:57597"/>
    </ligand>
</feature>
<feature type="binding site" evidence="1">
    <location>
        <position position="258"/>
    </location>
    <ligand>
        <name>NADPH</name>
        <dbReference type="ChEBI" id="CHEBI:57783"/>
    </ligand>
</feature>
<feature type="binding site" evidence="1">
    <location>
        <position position="258"/>
    </location>
    <ligand>
        <name>sn-glycerol 3-phosphate</name>
        <dbReference type="ChEBI" id="CHEBI:57597"/>
    </ligand>
</feature>
<feature type="binding site" evidence="1">
    <location>
        <position position="259"/>
    </location>
    <ligand>
        <name>sn-glycerol 3-phosphate</name>
        <dbReference type="ChEBI" id="CHEBI:57597"/>
    </ligand>
</feature>
<feature type="binding site" evidence="1">
    <location>
        <position position="282"/>
    </location>
    <ligand>
        <name>NADPH</name>
        <dbReference type="ChEBI" id="CHEBI:57783"/>
    </ligand>
</feature>
<feature type="binding site" evidence="1">
    <location>
        <position position="284"/>
    </location>
    <ligand>
        <name>NADPH</name>
        <dbReference type="ChEBI" id="CHEBI:57783"/>
    </ligand>
</feature>
<gene>
    <name evidence="1" type="primary">gpsA</name>
    <name type="ordered locus">SPN23F21160</name>
</gene>
<organism>
    <name type="scientific">Streptococcus pneumoniae (strain ATCC 700669 / Spain 23F-1)</name>
    <dbReference type="NCBI Taxonomy" id="561276"/>
    <lineage>
        <taxon>Bacteria</taxon>
        <taxon>Bacillati</taxon>
        <taxon>Bacillota</taxon>
        <taxon>Bacilli</taxon>
        <taxon>Lactobacillales</taxon>
        <taxon>Streptococcaceae</taxon>
        <taxon>Streptococcus</taxon>
    </lineage>
</organism>
<reference key="1">
    <citation type="journal article" date="2009" name="J. Bacteriol.">
        <title>Role of conjugative elements in the evolution of the multidrug-resistant pandemic clone Streptococcus pneumoniae Spain23F ST81.</title>
        <authorList>
            <person name="Croucher N.J."/>
            <person name="Walker D."/>
            <person name="Romero P."/>
            <person name="Lennard N."/>
            <person name="Paterson G.K."/>
            <person name="Bason N.C."/>
            <person name="Mitchell A.M."/>
            <person name="Quail M.A."/>
            <person name="Andrew P.W."/>
            <person name="Parkhill J."/>
            <person name="Bentley S.D."/>
            <person name="Mitchell T.J."/>
        </authorList>
    </citation>
    <scope>NUCLEOTIDE SEQUENCE [LARGE SCALE GENOMIC DNA]</scope>
    <source>
        <strain>ATCC 700669 / Spain 23F-1</strain>
    </source>
</reference>
<keyword id="KW-0963">Cytoplasm</keyword>
<keyword id="KW-0444">Lipid biosynthesis</keyword>
<keyword id="KW-0443">Lipid metabolism</keyword>
<keyword id="KW-0520">NAD</keyword>
<keyword id="KW-0521">NADP</keyword>
<keyword id="KW-0547">Nucleotide-binding</keyword>
<keyword id="KW-0560">Oxidoreductase</keyword>
<keyword id="KW-0594">Phospholipid biosynthesis</keyword>
<keyword id="KW-1208">Phospholipid metabolism</keyword>
<comment type="function">
    <text evidence="1">Catalyzes the reduction of the glycolytic intermediate dihydroxyacetone phosphate (DHAP) to sn-glycerol 3-phosphate (G3P), the key precursor for phospholipid synthesis.</text>
</comment>
<comment type="catalytic activity">
    <reaction evidence="1">
        <text>sn-glycerol 3-phosphate + NAD(+) = dihydroxyacetone phosphate + NADH + H(+)</text>
        <dbReference type="Rhea" id="RHEA:11092"/>
        <dbReference type="ChEBI" id="CHEBI:15378"/>
        <dbReference type="ChEBI" id="CHEBI:57540"/>
        <dbReference type="ChEBI" id="CHEBI:57597"/>
        <dbReference type="ChEBI" id="CHEBI:57642"/>
        <dbReference type="ChEBI" id="CHEBI:57945"/>
        <dbReference type="EC" id="1.1.1.94"/>
    </reaction>
    <physiologicalReaction direction="right-to-left" evidence="1">
        <dbReference type="Rhea" id="RHEA:11094"/>
    </physiologicalReaction>
</comment>
<comment type="catalytic activity">
    <reaction evidence="1">
        <text>sn-glycerol 3-phosphate + NADP(+) = dihydroxyacetone phosphate + NADPH + H(+)</text>
        <dbReference type="Rhea" id="RHEA:11096"/>
        <dbReference type="ChEBI" id="CHEBI:15378"/>
        <dbReference type="ChEBI" id="CHEBI:57597"/>
        <dbReference type="ChEBI" id="CHEBI:57642"/>
        <dbReference type="ChEBI" id="CHEBI:57783"/>
        <dbReference type="ChEBI" id="CHEBI:58349"/>
        <dbReference type="EC" id="1.1.1.94"/>
    </reaction>
    <physiologicalReaction direction="right-to-left" evidence="1">
        <dbReference type="Rhea" id="RHEA:11098"/>
    </physiologicalReaction>
</comment>
<comment type="pathway">
    <text evidence="1">Membrane lipid metabolism; glycerophospholipid metabolism.</text>
</comment>
<comment type="subcellular location">
    <subcellularLocation>
        <location evidence="1">Cytoplasm</location>
    </subcellularLocation>
</comment>
<comment type="similarity">
    <text evidence="1">Belongs to the NAD-dependent glycerol-3-phosphate dehydrogenase family.</text>
</comment>
<protein>
    <recommendedName>
        <fullName evidence="1">Glycerol-3-phosphate dehydrogenase [NAD(P)+]</fullName>
        <ecNumber evidence="1">1.1.1.94</ecNumber>
    </recommendedName>
    <alternativeName>
        <fullName evidence="1">NAD(P)(+)-dependent glycerol-3-phosphate dehydrogenase</fullName>
    </alternativeName>
    <alternativeName>
        <fullName evidence="1">NAD(P)H-dependent dihydroxyacetone-phosphate reductase</fullName>
    </alternativeName>
</protein>
<proteinExistence type="inferred from homology"/>
<evidence type="ECO:0000255" key="1">
    <source>
        <dbReference type="HAMAP-Rule" id="MF_00394"/>
    </source>
</evidence>
<dbReference type="EC" id="1.1.1.94" evidence="1"/>
<dbReference type="EMBL" id="FM211187">
    <property type="protein sequence ID" value="CAR69855.1"/>
    <property type="molecule type" value="Genomic_DNA"/>
</dbReference>
<dbReference type="RefSeq" id="WP_000415108.1">
    <property type="nucleotide sequence ID" value="NC_011900.1"/>
</dbReference>
<dbReference type="SMR" id="B8ZPL4"/>
<dbReference type="KEGG" id="sne:SPN23F21160"/>
<dbReference type="HOGENOM" id="CLU_033449_0_2_9"/>
<dbReference type="UniPathway" id="UPA00940"/>
<dbReference type="GO" id="GO:0005829">
    <property type="term" value="C:cytosol"/>
    <property type="evidence" value="ECO:0007669"/>
    <property type="project" value="TreeGrafter"/>
</dbReference>
<dbReference type="GO" id="GO:0047952">
    <property type="term" value="F:glycerol-3-phosphate dehydrogenase [NAD(P)+] activity"/>
    <property type="evidence" value="ECO:0007669"/>
    <property type="project" value="UniProtKB-UniRule"/>
</dbReference>
<dbReference type="GO" id="GO:0051287">
    <property type="term" value="F:NAD binding"/>
    <property type="evidence" value="ECO:0007669"/>
    <property type="project" value="InterPro"/>
</dbReference>
<dbReference type="GO" id="GO:0005975">
    <property type="term" value="P:carbohydrate metabolic process"/>
    <property type="evidence" value="ECO:0007669"/>
    <property type="project" value="InterPro"/>
</dbReference>
<dbReference type="GO" id="GO:0046167">
    <property type="term" value="P:glycerol-3-phosphate biosynthetic process"/>
    <property type="evidence" value="ECO:0007669"/>
    <property type="project" value="UniProtKB-UniRule"/>
</dbReference>
<dbReference type="GO" id="GO:0046168">
    <property type="term" value="P:glycerol-3-phosphate catabolic process"/>
    <property type="evidence" value="ECO:0007669"/>
    <property type="project" value="InterPro"/>
</dbReference>
<dbReference type="GO" id="GO:0006650">
    <property type="term" value="P:glycerophospholipid metabolic process"/>
    <property type="evidence" value="ECO:0007669"/>
    <property type="project" value="UniProtKB-UniRule"/>
</dbReference>
<dbReference type="GO" id="GO:0008654">
    <property type="term" value="P:phospholipid biosynthetic process"/>
    <property type="evidence" value="ECO:0007669"/>
    <property type="project" value="UniProtKB-KW"/>
</dbReference>
<dbReference type="FunFam" id="1.10.1040.10:FF:000001">
    <property type="entry name" value="Glycerol-3-phosphate dehydrogenase [NAD(P)+]"/>
    <property type="match status" value="1"/>
</dbReference>
<dbReference type="FunFam" id="3.40.50.720:FF:000019">
    <property type="entry name" value="Glycerol-3-phosphate dehydrogenase [NAD(P)+]"/>
    <property type="match status" value="1"/>
</dbReference>
<dbReference type="Gene3D" id="1.10.1040.10">
    <property type="entry name" value="N-(1-d-carboxylethyl)-l-norvaline Dehydrogenase, domain 2"/>
    <property type="match status" value="1"/>
</dbReference>
<dbReference type="Gene3D" id="3.40.50.720">
    <property type="entry name" value="NAD(P)-binding Rossmann-like Domain"/>
    <property type="match status" value="1"/>
</dbReference>
<dbReference type="HAMAP" id="MF_00394">
    <property type="entry name" value="NAD_Glyc3P_dehydrog"/>
    <property type="match status" value="1"/>
</dbReference>
<dbReference type="InterPro" id="IPR008927">
    <property type="entry name" value="6-PGluconate_DH-like_C_sf"/>
</dbReference>
<dbReference type="InterPro" id="IPR013328">
    <property type="entry name" value="6PGD_dom2"/>
</dbReference>
<dbReference type="InterPro" id="IPR006168">
    <property type="entry name" value="G3P_DH_NAD-dep"/>
</dbReference>
<dbReference type="InterPro" id="IPR006109">
    <property type="entry name" value="G3P_DH_NAD-dep_C"/>
</dbReference>
<dbReference type="InterPro" id="IPR011128">
    <property type="entry name" value="G3P_DH_NAD-dep_N"/>
</dbReference>
<dbReference type="InterPro" id="IPR036291">
    <property type="entry name" value="NAD(P)-bd_dom_sf"/>
</dbReference>
<dbReference type="NCBIfam" id="NF000940">
    <property type="entry name" value="PRK00094.1-2"/>
    <property type="match status" value="1"/>
</dbReference>
<dbReference type="NCBIfam" id="NF000941">
    <property type="entry name" value="PRK00094.1-3"/>
    <property type="match status" value="1"/>
</dbReference>
<dbReference type="NCBIfam" id="NF000942">
    <property type="entry name" value="PRK00094.1-4"/>
    <property type="match status" value="1"/>
</dbReference>
<dbReference type="PANTHER" id="PTHR11728">
    <property type="entry name" value="GLYCEROL-3-PHOSPHATE DEHYDROGENASE"/>
    <property type="match status" value="1"/>
</dbReference>
<dbReference type="PANTHER" id="PTHR11728:SF1">
    <property type="entry name" value="GLYCEROL-3-PHOSPHATE DEHYDROGENASE [NAD(+)] 2, CHLOROPLASTIC"/>
    <property type="match status" value="1"/>
</dbReference>
<dbReference type="Pfam" id="PF07479">
    <property type="entry name" value="NAD_Gly3P_dh_C"/>
    <property type="match status" value="1"/>
</dbReference>
<dbReference type="Pfam" id="PF01210">
    <property type="entry name" value="NAD_Gly3P_dh_N"/>
    <property type="match status" value="1"/>
</dbReference>
<dbReference type="PIRSF" id="PIRSF000114">
    <property type="entry name" value="Glycerol-3-P_dh"/>
    <property type="match status" value="1"/>
</dbReference>
<dbReference type="PRINTS" id="PR00077">
    <property type="entry name" value="GPDHDRGNASE"/>
</dbReference>
<dbReference type="SUPFAM" id="SSF48179">
    <property type="entry name" value="6-phosphogluconate dehydrogenase C-terminal domain-like"/>
    <property type="match status" value="1"/>
</dbReference>
<dbReference type="SUPFAM" id="SSF51735">
    <property type="entry name" value="NAD(P)-binding Rossmann-fold domains"/>
    <property type="match status" value="1"/>
</dbReference>
<dbReference type="PROSITE" id="PS00957">
    <property type="entry name" value="NAD_G3PDH"/>
    <property type="match status" value="1"/>
</dbReference>
<name>GPDA_STRPJ</name>
<sequence>MEKQTVAVLGPGSWGTALSQVLNDNGHEVRIWGNLPEQINEINTHHTNKHYFKDVVLDENIIAYTDLAETLKNVDAILFVVPTKVTRLVAQQVAQTLDHKVIIMHASKGLEPDSHKRLSTILEEEIPEHLRSDIVVVSGPSHAEETIVRDLTLITAASKDLQTAQYVQELFSNHYFRLYTNTDVIGVETAGALKNIIAVGAGALHGLGFGDNAKAAIIARGLAEITRLGVALGASPLTYSGLSGVGDLIVTGTSIHSRNWRAGDALGRGESLADIEANMGMVIEGISTTRAAYELAQELGVYMPITQAIYQVIYHGTNIKDAIYDIMNNEFKAENEWS</sequence>